<protein>
    <recommendedName>
        <fullName>Coatomer subunit alpha-3</fullName>
    </recommendedName>
    <alternativeName>
        <fullName>Alpha-coat protein 3</fullName>
        <shortName>Alpha-COP 3</shortName>
    </alternativeName>
</protein>
<gene>
    <name type="ordered locus">Os09g0127800</name>
    <name type="ordered locus">LOC_Os09g04110</name>
    <name type="ORF">OsJ_027299</name>
</gene>
<sequence>MLTKFETKSNRVKGLSFHPRRPWILASLHSGVIQMWDYRMGTLLDRFDEHDGPVRGVHFHATQPLFVSGGDDYKIKVWNYKTHRCLFTLHGHLDYIRTVQFHHEYPWIVSASDDQTIRIWNWQSRTCVAVLTGHNHYVMCASFHPKEDLVVSASLDQTVRVWDIGALRKKTVSPADDILRLTQMNTDLFGGVDAVVKYVLEGHDRGVNWASFHPTLPLIVSGADDRQVKLWRMNDTKAWEVDTLRGHMNNVSCVMFHAKQDIIVSNSEDKSIRVWDATKRTGIQTFRREHDRFWILAAHPEMNLLAAGHDNGMIVFKLERERPAFSVSGDTVFYVKDRFLRFFEYSTQKEVQLAPIRRPGSVSLNQSPRTLSYSPTENAVLICSDVDGGSYELYIVPKDSAGRTDYLQEAKKGAGGSAVFVARNRFAVLEKSSNQVLVKNLKNEIVKKSPLPIAMDAIYYAGTGNLLCKAEDRVTIFDLQQRLILGELQAPAVKYVVWSSDMESIALLSKHAVVIANKKLVHRCTLHETIRVKSGAWDENGVFIYTTLNHIKYCLPNGDSGIIKTLDVPIYITRAIGNNIFCLDRDGKNKLITVDASEYIFKLALLRKRYDHVMSMIKNSQLCGQAVISYLQQKGFPEVALHFVKDEKTRFNLALESGNIQIAVASAKEIDDKDHWYRLGIEALRQGNVGIVEYAYQRTKNFERLAFLYLITGYMDKVGFMCKIAGQNNNLMGQFHNALYLGDAMKRVEILENAGQLPLAYITAATHGLTEIADRLAAELGENIPSLPEGKTRSLLIPPAPLTASGDWPLLRVMRGIFEGGLDATGKAELEEDDEAAGADWGDEDLDMVDASEAMANGGDGFDAEEGEANEEDGEEGGWDLEDLELPPEAETPKNAGNALSVVFVAPPPGMPVSQIWTQKSSLAGEHAAAGNFDTAMRLLSRQLGIKNFAPLKPLFLDLHMGSHSYLRALATAPIIPVAVEKGWSESASPNVRGPPALVFTFSQMEDRLKAAYKATTEGKFPEALRQFLNILHTIPLIVVDSRREVDEVKELIEIVREYVLGLRMELKRKELRDDVNRQQELAAYFTNCKLQRVHMRLVLGSAMGLCYKQKNFATAEHFARMLLENNPNESQAKRARQVQQQCSGKKDSCELNYDYRNPFVVCGATYVPIYRGQKDVSCPYCGSRFVPSIEGQLCTICELAVVGADASGLLCSPTQLR</sequence>
<comment type="function">
    <text evidence="1">The coatomer is a cytosolic protein complex that binds to dilysine motifs and reversibly associates with Golgi non-clathrin-coated vesicles, which further mediate biosynthetic protein transport from the ER, via the Golgi up to the trans Golgi network. Coatomer complex is required for budding from Golgi membranes, and is essential for the retrograde Golgi-to-ER transport of dilysine-tagged proteins (By similarity).</text>
</comment>
<comment type="subunit">
    <text evidence="1">Oligomeric complex that consists of at least the alpha, beta, beta', gamma, delta, epsilon and zeta subunits.</text>
</comment>
<comment type="subcellular location">
    <subcellularLocation>
        <location evidence="1">Cytoplasm</location>
    </subcellularLocation>
    <subcellularLocation>
        <location evidence="1">Golgi apparatus membrane</location>
        <topology evidence="1">Peripheral membrane protein</topology>
        <orientation evidence="1">Cytoplasmic side</orientation>
    </subcellularLocation>
    <subcellularLocation>
        <location evidence="1">Cytoplasmic vesicle</location>
        <location evidence="1">COPI-coated vesicle membrane</location>
        <topology evidence="1">Peripheral membrane protein</topology>
        <orientation evidence="1">Cytoplasmic side</orientation>
    </subcellularLocation>
    <text evidence="1">The coatomer is cytoplasmic or polymerized on the cytoplasmic side of the Golgi, as well as on the vesicles/buds originating from it.</text>
</comment>
<comment type="sequence caution" evidence="3">
    <conflict type="erroneous termination">
        <sequence resource="EMBL" id="AK103786"/>
    </conflict>
    <text>Truncated C-terminus.</text>
</comment>
<comment type="sequence caution" evidence="3">
    <conflict type="frameshift">
        <sequence resource="EMBL" id="AK103786"/>
    </conflict>
</comment>
<feature type="chain" id="PRO_0000285603" description="Coatomer subunit alpha-3">
    <location>
        <begin position="1"/>
        <end position="1218"/>
    </location>
</feature>
<feature type="repeat" description="WD 1">
    <location>
        <begin position="7"/>
        <end position="48"/>
    </location>
</feature>
<feature type="repeat" description="WD 2">
    <location>
        <begin position="49"/>
        <end position="88"/>
    </location>
</feature>
<feature type="repeat" description="WD 3">
    <location>
        <begin position="91"/>
        <end position="132"/>
    </location>
</feature>
<feature type="repeat" description="WD 4">
    <location>
        <begin position="133"/>
        <end position="172"/>
    </location>
</feature>
<feature type="repeat" description="WD 5">
    <location>
        <begin position="202"/>
        <end position="241"/>
    </location>
</feature>
<feature type="repeat" description="WD 6">
    <location>
        <begin position="246"/>
        <end position="285"/>
    </location>
</feature>
<feature type="repeat" description="WD 7">
    <location>
        <begin position="288"/>
        <end position="326"/>
    </location>
</feature>
<feature type="repeat" description="WD 8">
    <location>
        <begin position="363"/>
        <end position="404"/>
    </location>
</feature>
<feature type="repeat" description="WD 9">
    <location>
        <begin position="450"/>
        <end position="489"/>
    </location>
</feature>
<feature type="region of interest" description="Disordered" evidence="2">
    <location>
        <begin position="854"/>
        <end position="893"/>
    </location>
</feature>
<feature type="compositionally biased region" description="Acidic residues" evidence="2">
    <location>
        <begin position="862"/>
        <end position="888"/>
    </location>
</feature>
<feature type="sequence conflict" description="In Ref. 5; AK103786." evidence="3" ref="5">
    <original>N</original>
    <variation>Y</variation>
    <location>
        <position position="540"/>
    </location>
</feature>
<reference key="1">
    <citation type="journal article" date="2005" name="Nature">
        <title>The map-based sequence of the rice genome.</title>
        <authorList>
            <consortium name="International rice genome sequencing project (IRGSP)"/>
        </authorList>
    </citation>
    <scope>NUCLEOTIDE SEQUENCE [LARGE SCALE GENOMIC DNA]</scope>
    <source>
        <strain>cv. Nipponbare</strain>
    </source>
</reference>
<reference key="2">
    <citation type="journal article" date="2008" name="Nucleic Acids Res.">
        <title>The rice annotation project database (RAP-DB): 2008 update.</title>
        <authorList>
            <consortium name="The rice annotation project (RAP)"/>
        </authorList>
    </citation>
    <scope>GENOME REANNOTATION</scope>
    <source>
        <strain>cv. Nipponbare</strain>
    </source>
</reference>
<reference key="3">
    <citation type="journal article" date="2013" name="Rice">
        <title>Improvement of the Oryza sativa Nipponbare reference genome using next generation sequence and optical map data.</title>
        <authorList>
            <person name="Kawahara Y."/>
            <person name="de la Bastide M."/>
            <person name="Hamilton J.P."/>
            <person name="Kanamori H."/>
            <person name="McCombie W.R."/>
            <person name="Ouyang S."/>
            <person name="Schwartz D.C."/>
            <person name="Tanaka T."/>
            <person name="Wu J."/>
            <person name="Zhou S."/>
            <person name="Childs K.L."/>
            <person name="Davidson R.M."/>
            <person name="Lin H."/>
            <person name="Quesada-Ocampo L."/>
            <person name="Vaillancourt B."/>
            <person name="Sakai H."/>
            <person name="Lee S.S."/>
            <person name="Kim J."/>
            <person name="Numa H."/>
            <person name="Itoh T."/>
            <person name="Buell C.R."/>
            <person name="Matsumoto T."/>
        </authorList>
    </citation>
    <scope>GENOME REANNOTATION</scope>
    <source>
        <strain>cv. Nipponbare</strain>
    </source>
</reference>
<reference key="4">
    <citation type="journal article" date="2005" name="PLoS Biol.">
        <title>The genomes of Oryza sativa: a history of duplications.</title>
        <authorList>
            <person name="Yu J."/>
            <person name="Wang J."/>
            <person name="Lin W."/>
            <person name="Li S."/>
            <person name="Li H."/>
            <person name="Zhou J."/>
            <person name="Ni P."/>
            <person name="Dong W."/>
            <person name="Hu S."/>
            <person name="Zeng C."/>
            <person name="Zhang J."/>
            <person name="Zhang Y."/>
            <person name="Li R."/>
            <person name="Xu Z."/>
            <person name="Li S."/>
            <person name="Li X."/>
            <person name="Zheng H."/>
            <person name="Cong L."/>
            <person name="Lin L."/>
            <person name="Yin J."/>
            <person name="Geng J."/>
            <person name="Li G."/>
            <person name="Shi J."/>
            <person name="Liu J."/>
            <person name="Lv H."/>
            <person name="Li J."/>
            <person name="Wang J."/>
            <person name="Deng Y."/>
            <person name="Ran L."/>
            <person name="Shi X."/>
            <person name="Wang X."/>
            <person name="Wu Q."/>
            <person name="Li C."/>
            <person name="Ren X."/>
            <person name="Wang J."/>
            <person name="Wang X."/>
            <person name="Li D."/>
            <person name="Liu D."/>
            <person name="Zhang X."/>
            <person name="Ji Z."/>
            <person name="Zhao W."/>
            <person name="Sun Y."/>
            <person name="Zhang Z."/>
            <person name="Bao J."/>
            <person name="Han Y."/>
            <person name="Dong L."/>
            <person name="Ji J."/>
            <person name="Chen P."/>
            <person name="Wu S."/>
            <person name="Liu J."/>
            <person name="Xiao Y."/>
            <person name="Bu D."/>
            <person name="Tan J."/>
            <person name="Yang L."/>
            <person name="Ye C."/>
            <person name="Zhang J."/>
            <person name="Xu J."/>
            <person name="Zhou Y."/>
            <person name="Yu Y."/>
            <person name="Zhang B."/>
            <person name="Zhuang S."/>
            <person name="Wei H."/>
            <person name="Liu B."/>
            <person name="Lei M."/>
            <person name="Yu H."/>
            <person name="Li Y."/>
            <person name="Xu H."/>
            <person name="Wei S."/>
            <person name="He X."/>
            <person name="Fang L."/>
            <person name="Zhang Z."/>
            <person name="Zhang Y."/>
            <person name="Huang X."/>
            <person name="Su Z."/>
            <person name="Tong W."/>
            <person name="Li J."/>
            <person name="Tong Z."/>
            <person name="Li S."/>
            <person name="Ye J."/>
            <person name="Wang L."/>
            <person name="Fang L."/>
            <person name="Lei T."/>
            <person name="Chen C.-S."/>
            <person name="Chen H.-C."/>
            <person name="Xu Z."/>
            <person name="Li H."/>
            <person name="Huang H."/>
            <person name="Zhang F."/>
            <person name="Xu H."/>
            <person name="Li N."/>
            <person name="Zhao C."/>
            <person name="Li S."/>
            <person name="Dong L."/>
            <person name="Huang Y."/>
            <person name="Li L."/>
            <person name="Xi Y."/>
            <person name="Qi Q."/>
            <person name="Li W."/>
            <person name="Zhang B."/>
            <person name="Hu W."/>
            <person name="Zhang Y."/>
            <person name="Tian X."/>
            <person name="Jiao Y."/>
            <person name="Liang X."/>
            <person name="Jin J."/>
            <person name="Gao L."/>
            <person name="Zheng W."/>
            <person name="Hao B."/>
            <person name="Liu S.-M."/>
            <person name="Wang W."/>
            <person name="Yuan L."/>
            <person name="Cao M."/>
            <person name="McDermott J."/>
            <person name="Samudrala R."/>
            <person name="Wang J."/>
            <person name="Wong G.K.-S."/>
            <person name="Yang H."/>
        </authorList>
    </citation>
    <scope>NUCLEOTIDE SEQUENCE [LARGE SCALE GENOMIC DNA]</scope>
    <source>
        <strain>cv. Nipponbare</strain>
    </source>
</reference>
<reference key="5">
    <citation type="journal article" date="2003" name="Science">
        <title>Collection, mapping, and annotation of over 28,000 cDNA clones from japonica rice.</title>
        <authorList>
            <consortium name="The rice full-length cDNA consortium"/>
        </authorList>
    </citation>
    <scope>NUCLEOTIDE SEQUENCE [LARGE SCALE MRNA]</scope>
    <source>
        <strain>cv. Nipponbare</strain>
    </source>
</reference>
<keyword id="KW-0963">Cytoplasm</keyword>
<keyword id="KW-0968">Cytoplasmic vesicle</keyword>
<keyword id="KW-0931">ER-Golgi transport</keyword>
<keyword id="KW-0333">Golgi apparatus</keyword>
<keyword id="KW-0472">Membrane</keyword>
<keyword id="KW-0653">Protein transport</keyword>
<keyword id="KW-1185">Reference proteome</keyword>
<keyword id="KW-0677">Repeat</keyword>
<keyword id="KW-0813">Transport</keyword>
<keyword id="KW-0853">WD repeat</keyword>
<dbReference type="EMBL" id="AP008215">
    <property type="protein sequence ID" value="BAF24526.1"/>
    <property type="molecule type" value="Genomic_DNA"/>
</dbReference>
<dbReference type="EMBL" id="AP014965">
    <property type="protein sequence ID" value="BAT06915.1"/>
    <property type="molecule type" value="Genomic_DNA"/>
</dbReference>
<dbReference type="EMBL" id="CM000146">
    <property type="protein sequence ID" value="EAZ43816.1"/>
    <property type="molecule type" value="Genomic_DNA"/>
</dbReference>
<dbReference type="EMBL" id="AK103786">
    <property type="status" value="NOT_ANNOTATED_CDS"/>
    <property type="molecule type" value="mRNA"/>
</dbReference>
<dbReference type="RefSeq" id="XP_015611836.1">
    <property type="nucleotide sequence ID" value="XM_015756350.1"/>
</dbReference>
<dbReference type="SMR" id="Q0J3D9"/>
<dbReference type="BioGRID" id="815477">
    <property type="interactions" value="1"/>
</dbReference>
<dbReference type="FunCoup" id="Q0J3D9">
    <property type="interactions" value="3497"/>
</dbReference>
<dbReference type="STRING" id="39947.Q0J3D9"/>
<dbReference type="iPTMnet" id="Q0J3D9"/>
<dbReference type="PaxDb" id="39947-Q0J3D9"/>
<dbReference type="EnsemblPlants" id="Os09t0127800-01">
    <property type="protein sequence ID" value="Os09t0127800-01"/>
    <property type="gene ID" value="Os09g0127800"/>
</dbReference>
<dbReference type="Gramene" id="Os09t0127800-01">
    <property type="protein sequence ID" value="Os09t0127800-01"/>
    <property type="gene ID" value="Os09g0127800"/>
</dbReference>
<dbReference type="KEGG" id="dosa:Os09g0127800"/>
<dbReference type="eggNOG" id="KOG0292">
    <property type="taxonomic scope" value="Eukaryota"/>
</dbReference>
<dbReference type="HOGENOM" id="CLU_007565_1_0_1"/>
<dbReference type="InParanoid" id="Q0J3D9"/>
<dbReference type="OMA" id="EMTYQKQ"/>
<dbReference type="OrthoDB" id="10261470at2759"/>
<dbReference type="Proteomes" id="UP000000763">
    <property type="component" value="Chromosome 9"/>
</dbReference>
<dbReference type="Proteomes" id="UP000007752">
    <property type="component" value="Chromosome 9"/>
</dbReference>
<dbReference type="Proteomes" id="UP000059680">
    <property type="component" value="Chromosome 9"/>
</dbReference>
<dbReference type="ExpressionAtlas" id="Q0J3D9">
    <property type="expression patterns" value="baseline and differential"/>
</dbReference>
<dbReference type="GO" id="GO:0030126">
    <property type="term" value="C:COPI vesicle coat"/>
    <property type="evidence" value="ECO:0000318"/>
    <property type="project" value="GO_Central"/>
</dbReference>
<dbReference type="GO" id="GO:0000139">
    <property type="term" value="C:Golgi membrane"/>
    <property type="evidence" value="ECO:0007669"/>
    <property type="project" value="UniProtKB-SubCell"/>
</dbReference>
<dbReference type="GO" id="GO:0005198">
    <property type="term" value="F:structural molecule activity"/>
    <property type="evidence" value="ECO:0007669"/>
    <property type="project" value="InterPro"/>
</dbReference>
<dbReference type="GO" id="GO:0006888">
    <property type="term" value="P:endoplasmic reticulum to Golgi vesicle-mediated transport"/>
    <property type="evidence" value="ECO:0000318"/>
    <property type="project" value="GO_Central"/>
</dbReference>
<dbReference type="GO" id="GO:0006891">
    <property type="term" value="P:intra-Golgi vesicle-mediated transport"/>
    <property type="evidence" value="ECO:0000318"/>
    <property type="project" value="GO_Central"/>
</dbReference>
<dbReference type="GO" id="GO:0006886">
    <property type="term" value="P:intracellular protein transport"/>
    <property type="evidence" value="ECO:0000318"/>
    <property type="project" value="GO_Central"/>
</dbReference>
<dbReference type="GO" id="GO:0006890">
    <property type="term" value="P:retrograde vesicle-mediated transport, Golgi to endoplasmic reticulum"/>
    <property type="evidence" value="ECO:0000318"/>
    <property type="project" value="GO_Central"/>
</dbReference>
<dbReference type="CDD" id="cd22948">
    <property type="entry name" value="Coatomer_WDAD_alpha"/>
    <property type="match status" value="1"/>
</dbReference>
<dbReference type="CDD" id="cd00200">
    <property type="entry name" value="WD40"/>
    <property type="match status" value="1"/>
</dbReference>
<dbReference type="FunFam" id="1.25.40.470:FF:000002">
    <property type="entry name" value="Coatomer subunit alpha"/>
    <property type="match status" value="1"/>
</dbReference>
<dbReference type="FunFam" id="2.130.10.10:FF:000010">
    <property type="entry name" value="Coatomer subunit alpha"/>
    <property type="match status" value="1"/>
</dbReference>
<dbReference type="Gene3D" id="1.25.40.470">
    <property type="match status" value="1"/>
</dbReference>
<dbReference type="Gene3D" id="2.130.10.10">
    <property type="entry name" value="YVTN repeat-like/Quinoprotein amine dehydrogenase"/>
    <property type="match status" value="1"/>
</dbReference>
<dbReference type="InterPro" id="IPR006692">
    <property type="entry name" value="Beta-prop_COPA/B_2nd"/>
</dbReference>
<dbReference type="InterPro" id="IPR047312">
    <property type="entry name" value="Coatomer_alpha_WD-assoc_reg"/>
</dbReference>
<dbReference type="InterPro" id="IPR016391">
    <property type="entry name" value="Coatomer_asu"/>
</dbReference>
<dbReference type="InterPro" id="IPR010714">
    <property type="entry name" value="Coatomer_asu_C"/>
</dbReference>
<dbReference type="InterPro" id="IPR050844">
    <property type="entry name" value="Coatomer_complex_subunit"/>
</dbReference>
<dbReference type="InterPro" id="IPR020472">
    <property type="entry name" value="G-protein_beta_WD-40_rep"/>
</dbReference>
<dbReference type="InterPro" id="IPR011048">
    <property type="entry name" value="Haem_d1_sf"/>
</dbReference>
<dbReference type="InterPro" id="IPR056176">
    <property type="entry name" value="TPR_COPA_B"/>
</dbReference>
<dbReference type="InterPro" id="IPR015943">
    <property type="entry name" value="WD40/YVTN_repeat-like_dom_sf"/>
</dbReference>
<dbReference type="InterPro" id="IPR019775">
    <property type="entry name" value="WD40_repeat_CS"/>
</dbReference>
<dbReference type="InterPro" id="IPR036322">
    <property type="entry name" value="WD40_repeat_dom_sf"/>
</dbReference>
<dbReference type="InterPro" id="IPR001680">
    <property type="entry name" value="WD40_rpt"/>
</dbReference>
<dbReference type="PANTHER" id="PTHR19876">
    <property type="entry name" value="COATOMER"/>
    <property type="match status" value="1"/>
</dbReference>
<dbReference type="PANTHER" id="PTHR19876:SF1">
    <property type="entry name" value="COATOMER SUBUNIT ALPHA"/>
    <property type="match status" value="1"/>
</dbReference>
<dbReference type="Pfam" id="PF04053">
    <property type="entry name" value="B-prop_COPA_B_2nd"/>
    <property type="match status" value="1"/>
</dbReference>
<dbReference type="Pfam" id="PF06957">
    <property type="entry name" value="COPI_C"/>
    <property type="match status" value="1"/>
</dbReference>
<dbReference type="Pfam" id="PF23953">
    <property type="entry name" value="TPR_COPA_B"/>
    <property type="match status" value="1"/>
</dbReference>
<dbReference type="Pfam" id="PF00400">
    <property type="entry name" value="WD40"/>
    <property type="match status" value="5"/>
</dbReference>
<dbReference type="PIRSF" id="PIRSF003354">
    <property type="entry name" value="Coatomer_alpha_subunit"/>
    <property type="match status" value="1"/>
</dbReference>
<dbReference type="PRINTS" id="PR00320">
    <property type="entry name" value="GPROTEINBRPT"/>
</dbReference>
<dbReference type="SMART" id="SM00320">
    <property type="entry name" value="WD40"/>
    <property type="match status" value="7"/>
</dbReference>
<dbReference type="SUPFAM" id="SSF51004">
    <property type="entry name" value="C-terminal (heme d1) domain of cytochrome cd1-nitrite reductase"/>
    <property type="match status" value="1"/>
</dbReference>
<dbReference type="SUPFAM" id="SSF50978">
    <property type="entry name" value="WD40 repeat-like"/>
    <property type="match status" value="1"/>
</dbReference>
<dbReference type="PROSITE" id="PS00678">
    <property type="entry name" value="WD_REPEATS_1"/>
    <property type="match status" value="1"/>
</dbReference>
<dbReference type="PROSITE" id="PS50082">
    <property type="entry name" value="WD_REPEATS_2"/>
    <property type="match status" value="5"/>
</dbReference>
<dbReference type="PROSITE" id="PS50294">
    <property type="entry name" value="WD_REPEATS_REGION"/>
    <property type="match status" value="1"/>
</dbReference>
<proteinExistence type="evidence at transcript level"/>
<evidence type="ECO:0000250" key="1"/>
<evidence type="ECO:0000256" key="2">
    <source>
        <dbReference type="SAM" id="MobiDB-lite"/>
    </source>
</evidence>
<evidence type="ECO:0000305" key="3"/>
<accession>Q0J3D9</accession>
<accession>A0A0P0XK16</accession>
<organism>
    <name type="scientific">Oryza sativa subsp. japonica</name>
    <name type="common">Rice</name>
    <dbReference type="NCBI Taxonomy" id="39947"/>
    <lineage>
        <taxon>Eukaryota</taxon>
        <taxon>Viridiplantae</taxon>
        <taxon>Streptophyta</taxon>
        <taxon>Embryophyta</taxon>
        <taxon>Tracheophyta</taxon>
        <taxon>Spermatophyta</taxon>
        <taxon>Magnoliopsida</taxon>
        <taxon>Liliopsida</taxon>
        <taxon>Poales</taxon>
        <taxon>Poaceae</taxon>
        <taxon>BOP clade</taxon>
        <taxon>Oryzoideae</taxon>
        <taxon>Oryzeae</taxon>
        <taxon>Oryzinae</taxon>
        <taxon>Oryza</taxon>
        <taxon>Oryza sativa</taxon>
    </lineage>
</organism>
<name>COPA3_ORYSJ</name>